<dbReference type="EMBL" id="AY994368">
    <property type="protein sequence ID" value="AAY58055.1"/>
    <property type="molecule type" value="Genomic_DNA"/>
</dbReference>
<dbReference type="EMBL" id="AY994369">
    <property type="protein sequence ID" value="AAY58056.1"/>
    <property type="molecule type" value="Genomic_DNA"/>
</dbReference>
<dbReference type="EMBL" id="AY994370">
    <property type="protein sequence ID" value="AAY58057.1"/>
    <property type="molecule type" value="Genomic_DNA"/>
</dbReference>
<dbReference type="SMR" id="Q1X6K1"/>
<dbReference type="GO" id="GO:0005743">
    <property type="term" value="C:mitochondrial inner membrane"/>
    <property type="evidence" value="ECO:0007669"/>
    <property type="project" value="UniProtKB-SubCell"/>
</dbReference>
<dbReference type="GO" id="GO:0045275">
    <property type="term" value="C:respiratory chain complex III"/>
    <property type="evidence" value="ECO:0007669"/>
    <property type="project" value="InterPro"/>
</dbReference>
<dbReference type="GO" id="GO:0046872">
    <property type="term" value="F:metal ion binding"/>
    <property type="evidence" value="ECO:0007669"/>
    <property type="project" value="UniProtKB-KW"/>
</dbReference>
<dbReference type="GO" id="GO:0008121">
    <property type="term" value="F:ubiquinol-cytochrome-c reductase activity"/>
    <property type="evidence" value="ECO:0007669"/>
    <property type="project" value="InterPro"/>
</dbReference>
<dbReference type="GO" id="GO:0006122">
    <property type="term" value="P:mitochondrial electron transport, ubiquinol to cytochrome c"/>
    <property type="evidence" value="ECO:0007669"/>
    <property type="project" value="TreeGrafter"/>
</dbReference>
<dbReference type="CDD" id="cd00290">
    <property type="entry name" value="cytochrome_b_C"/>
    <property type="match status" value="1"/>
</dbReference>
<dbReference type="CDD" id="cd00284">
    <property type="entry name" value="Cytochrome_b_N"/>
    <property type="match status" value="1"/>
</dbReference>
<dbReference type="FunFam" id="1.20.810.10:FF:000002">
    <property type="entry name" value="Cytochrome b"/>
    <property type="match status" value="1"/>
</dbReference>
<dbReference type="Gene3D" id="1.20.810.10">
    <property type="entry name" value="Cytochrome Bc1 Complex, Chain C"/>
    <property type="match status" value="1"/>
</dbReference>
<dbReference type="InterPro" id="IPR005798">
    <property type="entry name" value="Cyt_b/b6_C"/>
</dbReference>
<dbReference type="InterPro" id="IPR036150">
    <property type="entry name" value="Cyt_b/b6_C_sf"/>
</dbReference>
<dbReference type="InterPro" id="IPR005797">
    <property type="entry name" value="Cyt_b/b6_N"/>
</dbReference>
<dbReference type="InterPro" id="IPR027387">
    <property type="entry name" value="Cytb/b6-like_sf"/>
</dbReference>
<dbReference type="InterPro" id="IPR030689">
    <property type="entry name" value="Cytochrome_b"/>
</dbReference>
<dbReference type="InterPro" id="IPR048260">
    <property type="entry name" value="Cytochrome_b_C_euk/bac"/>
</dbReference>
<dbReference type="InterPro" id="IPR048259">
    <property type="entry name" value="Cytochrome_b_N_euk/bac"/>
</dbReference>
<dbReference type="InterPro" id="IPR016174">
    <property type="entry name" value="Di-haem_cyt_TM"/>
</dbReference>
<dbReference type="PANTHER" id="PTHR19271">
    <property type="entry name" value="CYTOCHROME B"/>
    <property type="match status" value="1"/>
</dbReference>
<dbReference type="PANTHER" id="PTHR19271:SF16">
    <property type="entry name" value="CYTOCHROME B"/>
    <property type="match status" value="1"/>
</dbReference>
<dbReference type="Pfam" id="PF00032">
    <property type="entry name" value="Cytochrom_B_C"/>
    <property type="match status" value="1"/>
</dbReference>
<dbReference type="Pfam" id="PF00033">
    <property type="entry name" value="Cytochrome_B"/>
    <property type="match status" value="1"/>
</dbReference>
<dbReference type="PIRSF" id="PIRSF038885">
    <property type="entry name" value="COB"/>
    <property type="match status" value="1"/>
</dbReference>
<dbReference type="SUPFAM" id="SSF81648">
    <property type="entry name" value="a domain/subunit of cytochrome bc1 complex (Ubiquinol-cytochrome c reductase)"/>
    <property type="match status" value="1"/>
</dbReference>
<dbReference type="SUPFAM" id="SSF81342">
    <property type="entry name" value="Transmembrane di-heme cytochromes"/>
    <property type="match status" value="1"/>
</dbReference>
<dbReference type="PROSITE" id="PS51003">
    <property type="entry name" value="CYTB_CTER"/>
    <property type="match status" value="1"/>
</dbReference>
<dbReference type="PROSITE" id="PS51002">
    <property type="entry name" value="CYTB_NTER"/>
    <property type="match status" value="1"/>
</dbReference>
<evidence type="ECO:0000250" key="1"/>
<evidence type="ECO:0000250" key="2">
    <source>
        <dbReference type="UniProtKB" id="P00157"/>
    </source>
</evidence>
<evidence type="ECO:0000255" key="3">
    <source>
        <dbReference type="PROSITE-ProRule" id="PRU00967"/>
    </source>
</evidence>
<evidence type="ECO:0000255" key="4">
    <source>
        <dbReference type="PROSITE-ProRule" id="PRU00968"/>
    </source>
</evidence>
<proteinExistence type="inferred from homology"/>
<geneLocation type="mitochondrion"/>
<reference key="1">
    <citation type="submission" date="2005-03" db="EMBL/GenBank/DDBJ databases">
        <title>New phylogenetic and taxonomic implications of molecular study of Crocidura suaveolens species group.</title>
        <authorList>
            <person name="Bannikova A.A."/>
            <person name="Lebedev V.S."/>
            <person name="Kramerov D.A."/>
            <person name="Zaitsev M.V."/>
        </authorList>
    </citation>
    <scope>NUCLEOTIDE SEQUENCE [GENOMIC DNA]</scope>
    <source>
        <strain>Isolate A-0V-1-A</strain>
        <strain>Isolate A-0V-2-A</strain>
        <strain>Isolate A-0V-3-A</strain>
    </source>
</reference>
<sequence length="379" mass="42703">MTNIRKTHPLMKIVNSSFIDLPAPSNISSWWNFGSLLGICLITQILTGLFLAMHYTSDTVTAFSSVTHICRDVNYGWLIRYLHANGASMFFICLFLHVGRGLYYGSYMYLETWNIGVLLLFAVMATAFMGYVLPWGQMSFWGATVITNLLSAIPYIGTNLVEWIWGGFSVDKATLTRFFAFHFILPFIVAALAGVHLLFLHETGSNNPSGLNSDTDKIPFHPYYTIKDILGALIMISMLSSLVLFSPDMLGDPDNYTPANPLNTPPHIKPEWYFLFAYAILRSIPNKLGGVLALVLSILILMIIPLLHTAKQRSMMFRPMSQCLFWILVADLLTLTWIGGQPVEYPFVVIGQLASVIYFLIILFIMPITSMIENQLLKW</sequence>
<name>CYB_CROCP</name>
<comment type="function">
    <text evidence="2">Component of the ubiquinol-cytochrome c reductase complex (complex III or cytochrome b-c1 complex) that is part of the mitochondrial respiratory chain. The b-c1 complex mediates electron transfer from ubiquinol to cytochrome c. Contributes to the generation of a proton gradient across the mitochondrial membrane that is then used for ATP synthesis.</text>
</comment>
<comment type="cofactor">
    <cofactor evidence="2">
        <name>heme b</name>
        <dbReference type="ChEBI" id="CHEBI:60344"/>
    </cofactor>
    <text evidence="2">Binds 2 heme b groups non-covalently.</text>
</comment>
<comment type="subunit">
    <text evidence="2">The cytochrome bc1 complex contains 11 subunits: 3 respiratory subunits (MT-CYB, CYC1 and UQCRFS1), 2 core proteins (UQCRC1 and UQCRC2) and 6 low-molecular weight proteins (UQCRH/QCR6, UQCRB/QCR7, UQCRQ/QCR8, UQCR10/QCR9, UQCR11/QCR10 and a cleavage product of UQCRFS1). This cytochrome bc1 complex then forms a dimer.</text>
</comment>
<comment type="subcellular location">
    <subcellularLocation>
        <location evidence="2">Mitochondrion inner membrane</location>
        <topology evidence="2">Multi-pass membrane protein</topology>
    </subcellularLocation>
</comment>
<comment type="miscellaneous">
    <text evidence="1">Heme 1 (or BL or b562) is low-potential and absorbs at about 562 nm, and heme 2 (or BH or b566) is high-potential and absorbs at about 566 nm.</text>
</comment>
<comment type="similarity">
    <text evidence="3 4">Belongs to the cytochrome b family.</text>
</comment>
<comment type="caution">
    <text evidence="2">The full-length protein contains only eight transmembrane helices, not nine as predicted by bioinformatics tools.</text>
</comment>
<organism>
    <name type="scientific">Crocidura caspica</name>
    <name type="common">Caspian white-toothed shrew</name>
    <name type="synonym">Crocidura suaveolens caspica</name>
    <dbReference type="NCBI Taxonomy" id="317981"/>
    <lineage>
        <taxon>Eukaryota</taxon>
        <taxon>Metazoa</taxon>
        <taxon>Chordata</taxon>
        <taxon>Craniata</taxon>
        <taxon>Vertebrata</taxon>
        <taxon>Euteleostomi</taxon>
        <taxon>Mammalia</taxon>
        <taxon>Eutheria</taxon>
        <taxon>Laurasiatheria</taxon>
        <taxon>Eulipotyphla</taxon>
        <taxon>Soricidae</taxon>
        <taxon>Crocidurinae</taxon>
        <taxon>Crocidura</taxon>
    </lineage>
</organism>
<protein>
    <recommendedName>
        <fullName>Cytochrome b</fullName>
    </recommendedName>
    <alternativeName>
        <fullName>Complex III subunit 3</fullName>
    </alternativeName>
    <alternativeName>
        <fullName>Complex III subunit III</fullName>
    </alternativeName>
    <alternativeName>
        <fullName>Cytochrome b-c1 complex subunit 3</fullName>
    </alternativeName>
    <alternativeName>
        <fullName>Ubiquinol-cytochrome-c reductase complex cytochrome b subunit</fullName>
    </alternativeName>
</protein>
<feature type="chain" id="PRO_0000254680" description="Cytochrome b">
    <location>
        <begin position="1"/>
        <end position="379"/>
    </location>
</feature>
<feature type="transmembrane region" description="Helical" evidence="2">
    <location>
        <begin position="33"/>
        <end position="53"/>
    </location>
</feature>
<feature type="transmembrane region" description="Helical" evidence="2">
    <location>
        <begin position="77"/>
        <end position="98"/>
    </location>
</feature>
<feature type="transmembrane region" description="Helical" evidence="2">
    <location>
        <begin position="113"/>
        <end position="133"/>
    </location>
</feature>
<feature type="transmembrane region" description="Helical" evidence="2">
    <location>
        <begin position="178"/>
        <end position="198"/>
    </location>
</feature>
<feature type="transmembrane region" description="Helical" evidence="2">
    <location>
        <begin position="226"/>
        <end position="246"/>
    </location>
</feature>
<feature type="transmembrane region" description="Helical" evidence="2">
    <location>
        <begin position="288"/>
        <end position="308"/>
    </location>
</feature>
<feature type="transmembrane region" description="Helical" evidence="2">
    <location>
        <begin position="320"/>
        <end position="340"/>
    </location>
</feature>
<feature type="transmembrane region" description="Helical" evidence="2">
    <location>
        <begin position="347"/>
        <end position="367"/>
    </location>
</feature>
<feature type="binding site" description="axial binding residue" evidence="2">
    <location>
        <position position="83"/>
    </location>
    <ligand>
        <name>heme b</name>
        <dbReference type="ChEBI" id="CHEBI:60344"/>
        <label>b562</label>
    </ligand>
    <ligandPart>
        <name>Fe</name>
        <dbReference type="ChEBI" id="CHEBI:18248"/>
    </ligandPart>
</feature>
<feature type="binding site" description="axial binding residue" evidence="2">
    <location>
        <position position="97"/>
    </location>
    <ligand>
        <name>heme b</name>
        <dbReference type="ChEBI" id="CHEBI:60344"/>
        <label>b566</label>
    </ligand>
    <ligandPart>
        <name>Fe</name>
        <dbReference type="ChEBI" id="CHEBI:18248"/>
    </ligandPart>
</feature>
<feature type="binding site" description="axial binding residue" evidence="2">
    <location>
        <position position="182"/>
    </location>
    <ligand>
        <name>heme b</name>
        <dbReference type="ChEBI" id="CHEBI:60344"/>
        <label>b562</label>
    </ligand>
    <ligandPart>
        <name>Fe</name>
        <dbReference type="ChEBI" id="CHEBI:18248"/>
    </ligandPart>
</feature>
<feature type="binding site" description="axial binding residue" evidence="2">
    <location>
        <position position="196"/>
    </location>
    <ligand>
        <name>heme b</name>
        <dbReference type="ChEBI" id="CHEBI:60344"/>
        <label>b566</label>
    </ligand>
    <ligandPart>
        <name>Fe</name>
        <dbReference type="ChEBI" id="CHEBI:18248"/>
    </ligandPart>
</feature>
<feature type="binding site" evidence="2">
    <location>
        <position position="201"/>
    </location>
    <ligand>
        <name>a ubiquinone</name>
        <dbReference type="ChEBI" id="CHEBI:16389"/>
    </ligand>
</feature>
<feature type="sequence variant" description="In strain: Isolate A-0V-2-A and Isolate A-0V-3-A.">
    <original>V</original>
    <variation>M</variation>
    <location>
        <position position="60"/>
    </location>
</feature>
<feature type="sequence variant" description="In strain: Isolate A-0V-3-A.">
    <original>V</original>
    <variation>M</variation>
    <location>
        <position position="98"/>
    </location>
</feature>
<feature type="sequence variant" description="In strain: Isolate A-0V-2-A.">
    <original>Y</original>
    <variation>H</variation>
    <location>
        <position position="109"/>
    </location>
</feature>
<gene>
    <name type="primary">MT-CYB</name>
    <name type="synonym">COB</name>
    <name type="synonym">CYTB</name>
    <name type="synonym">MTCYB</name>
</gene>
<keyword id="KW-0249">Electron transport</keyword>
<keyword id="KW-0349">Heme</keyword>
<keyword id="KW-0408">Iron</keyword>
<keyword id="KW-0472">Membrane</keyword>
<keyword id="KW-0479">Metal-binding</keyword>
<keyword id="KW-0496">Mitochondrion</keyword>
<keyword id="KW-0999">Mitochondrion inner membrane</keyword>
<keyword id="KW-0679">Respiratory chain</keyword>
<keyword id="KW-0812">Transmembrane</keyword>
<keyword id="KW-1133">Transmembrane helix</keyword>
<keyword id="KW-0813">Transport</keyword>
<keyword id="KW-0830">Ubiquinone</keyword>
<accession>Q1X6K1</accession>
<accession>Q1X6J9</accession>
<accession>Q1X6K0</accession>